<keyword id="KW-0687">Ribonucleoprotein</keyword>
<keyword id="KW-0689">Ribosomal protein</keyword>
<keyword id="KW-0694">RNA-binding</keyword>
<keyword id="KW-0699">rRNA-binding</keyword>
<accession>Q01NW2</accession>
<sequence length="89" mass="10275">MALAIEAKRQILTGNQRHKTDTGSPEVQIALLSTRITMLTEHFKTHKKDHGSRKGLLTLVAKRRRLLTYLRDTDPERYKAVLLKLGIRR</sequence>
<organism>
    <name type="scientific">Solibacter usitatus (strain Ellin6076)</name>
    <dbReference type="NCBI Taxonomy" id="234267"/>
    <lineage>
        <taxon>Bacteria</taxon>
        <taxon>Pseudomonadati</taxon>
        <taxon>Acidobacteriota</taxon>
        <taxon>Terriglobia</taxon>
        <taxon>Bryobacterales</taxon>
        <taxon>Solibacteraceae</taxon>
        <taxon>Candidatus Solibacter</taxon>
    </lineage>
</organism>
<evidence type="ECO:0000255" key="1">
    <source>
        <dbReference type="HAMAP-Rule" id="MF_01343"/>
    </source>
</evidence>
<evidence type="ECO:0000305" key="2"/>
<protein>
    <recommendedName>
        <fullName evidence="1">Small ribosomal subunit protein uS15</fullName>
    </recommendedName>
    <alternativeName>
        <fullName evidence="2">30S ribosomal protein S15</fullName>
    </alternativeName>
</protein>
<reference key="1">
    <citation type="journal article" date="2009" name="Appl. Environ. Microbiol.">
        <title>Three genomes from the phylum Acidobacteria provide insight into the lifestyles of these microorganisms in soils.</title>
        <authorList>
            <person name="Ward N.L."/>
            <person name="Challacombe J.F."/>
            <person name="Janssen P.H."/>
            <person name="Henrissat B."/>
            <person name="Coutinho P.M."/>
            <person name="Wu M."/>
            <person name="Xie G."/>
            <person name="Haft D.H."/>
            <person name="Sait M."/>
            <person name="Badger J."/>
            <person name="Barabote R.D."/>
            <person name="Bradley B."/>
            <person name="Brettin T.S."/>
            <person name="Brinkac L.M."/>
            <person name="Bruce D."/>
            <person name="Creasy T."/>
            <person name="Daugherty S.C."/>
            <person name="Davidsen T.M."/>
            <person name="DeBoy R.T."/>
            <person name="Detter J.C."/>
            <person name="Dodson R.J."/>
            <person name="Durkin A.S."/>
            <person name="Ganapathy A."/>
            <person name="Gwinn-Giglio M."/>
            <person name="Han C.S."/>
            <person name="Khouri H."/>
            <person name="Kiss H."/>
            <person name="Kothari S.P."/>
            <person name="Madupu R."/>
            <person name="Nelson K.E."/>
            <person name="Nelson W.C."/>
            <person name="Paulsen I."/>
            <person name="Penn K."/>
            <person name="Ren Q."/>
            <person name="Rosovitz M.J."/>
            <person name="Selengut J.D."/>
            <person name="Shrivastava S."/>
            <person name="Sullivan S.A."/>
            <person name="Tapia R."/>
            <person name="Thompson L.S."/>
            <person name="Watkins K.L."/>
            <person name="Yang Q."/>
            <person name="Yu C."/>
            <person name="Zafar N."/>
            <person name="Zhou L."/>
            <person name="Kuske C.R."/>
        </authorList>
    </citation>
    <scope>NUCLEOTIDE SEQUENCE [LARGE SCALE GENOMIC DNA]</scope>
    <source>
        <strain>Ellin6076</strain>
    </source>
</reference>
<comment type="function">
    <text evidence="1">One of the primary rRNA binding proteins, it binds directly to 16S rRNA where it helps nucleate assembly of the platform of the 30S subunit by binding and bridging several RNA helices of the 16S rRNA.</text>
</comment>
<comment type="function">
    <text evidence="1">Forms an intersubunit bridge (bridge B4) with the 23S rRNA of the 50S subunit in the ribosome.</text>
</comment>
<comment type="subunit">
    <text evidence="1">Part of the 30S ribosomal subunit. Forms a bridge to the 50S subunit in the 70S ribosome, contacting the 23S rRNA.</text>
</comment>
<comment type="similarity">
    <text evidence="1">Belongs to the universal ribosomal protein uS15 family.</text>
</comment>
<dbReference type="EMBL" id="CP000473">
    <property type="protein sequence ID" value="ABJ88658.1"/>
    <property type="molecule type" value="Genomic_DNA"/>
</dbReference>
<dbReference type="SMR" id="Q01NW2"/>
<dbReference type="FunCoup" id="Q01NW2">
    <property type="interactions" value="519"/>
</dbReference>
<dbReference type="STRING" id="234267.Acid_7760"/>
<dbReference type="KEGG" id="sus:Acid_7760"/>
<dbReference type="eggNOG" id="COG0184">
    <property type="taxonomic scope" value="Bacteria"/>
</dbReference>
<dbReference type="HOGENOM" id="CLU_148518_0_0_0"/>
<dbReference type="InParanoid" id="Q01NW2"/>
<dbReference type="OrthoDB" id="9799262at2"/>
<dbReference type="GO" id="GO:0022627">
    <property type="term" value="C:cytosolic small ribosomal subunit"/>
    <property type="evidence" value="ECO:0007669"/>
    <property type="project" value="TreeGrafter"/>
</dbReference>
<dbReference type="GO" id="GO:0019843">
    <property type="term" value="F:rRNA binding"/>
    <property type="evidence" value="ECO:0007669"/>
    <property type="project" value="UniProtKB-UniRule"/>
</dbReference>
<dbReference type="GO" id="GO:0003735">
    <property type="term" value="F:structural constituent of ribosome"/>
    <property type="evidence" value="ECO:0007669"/>
    <property type="project" value="InterPro"/>
</dbReference>
<dbReference type="GO" id="GO:0006412">
    <property type="term" value="P:translation"/>
    <property type="evidence" value="ECO:0007669"/>
    <property type="project" value="UniProtKB-UniRule"/>
</dbReference>
<dbReference type="CDD" id="cd00353">
    <property type="entry name" value="Ribosomal_S15p_S13e"/>
    <property type="match status" value="1"/>
</dbReference>
<dbReference type="FunFam" id="1.10.287.10:FF:000002">
    <property type="entry name" value="30S ribosomal protein S15"/>
    <property type="match status" value="1"/>
</dbReference>
<dbReference type="Gene3D" id="6.10.250.3130">
    <property type="match status" value="1"/>
</dbReference>
<dbReference type="Gene3D" id="1.10.287.10">
    <property type="entry name" value="S15/NS1, RNA-binding"/>
    <property type="match status" value="1"/>
</dbReference>
<dbReference type="HAMAP" id="MF_01343_B">
    <property type="entry name" value="Ribosomal_uS15_B"/>
    <property type="match status" value="1"/>
</dbReference>
<dbReference type="InterPro" id="IPR000589">
    <property type="entry name" value="Ribosomal_uS15"/>
</dbReference>
<dbReference type="InterPro" id="IPR005290">
    <property type="entry name" value="Ribosomal_uS15_bac-type"/>
</dbReference>
<dbReference type="InterPro" id="IPR009068">
    <property type="entry name" value="uS15_NS1_RNA-bd_sf"/>
</dbReference>
<dbReference type="NCBIfam" id="TIGR00952">
    <property type="entry name" value="S15_bact"/>
    <property type="match status" value="1"/>
</dbReference>
<dbReference type="PANTHER" id="PTHR23321">
    <property type="entry name" value="RIBOSOMAL PROTEIN S15, BACTERIAL AND ORGANELLAR"/>
    <property type="match status" value="1"/>
</dbReference>
<dbReference type="PANTHER" id="PTHR23321:SF26">
    <property type="entry name" value="SMALL RIBOSOMAL SUBUNIT PROTEIN US15M"/>
    <property type="match status" value="1"/>
</dbReference>
<dbReference type="Pfam" id="PF00312">
    <property type="entry name" value="Ribosomal_S15"/>
    <property type="match status" value="1"/>
</dbReference>
<dbReference type="SMART" id="SM01387">
    <property type="entry name" value="Ribosomal_S15"/>
    <property type="match status" value="1"/>
</dbReference>
<dbReference type="SUPFAM" id="SSF47060">
    <property type="entry name" value="S15/NS1 RNA-binding domain"/>
    <property type="match status" value="1"/>
</dbReference>
<dbReference type="PROSITE" id="PS00362">
    <property type="entry name" value="RIBOSOMAL_S15"/>
    <property type="match status" value="1"/>
</dbReference>
<proteinExistence type="inferred from homology"/>
<gene>
    <name evidence="1" type="primary">rpsO</name>
    <name type="ordered locus">Acid_7760</name>
</gene>
<name>RS15_SOLUE</name>
<feature type="chain" id="PRO_1000054877" description="Small ribosomal subunit protein uS15">
    <location>
        <begin position="1"/>
        <end position="89"/>
    </location>
</feature>